<reference key="1">
    <citation type="journal article" date="2000" name="Science">
        <title>Complete genome sequence of Neisseria meningitidis serogroup B strain MC58.</title>
        <authorList>
            <person name="Tettelin H."/>
            <person name="Saunders N.J."/>
            <person name="Heidelberg J.F."/>
            <person name="Jeffries A.C."/>
            <person name="Nelson K.E."/>
            <person name="Eisen J.A."/>
            <person name="Ketchum K.A."/>
            <person name="Hood D.W."/>
            <person name="Peden J.F."/>
            <person name="Dodson R.J."/>
            <person name="Nelson W.C."/>
            <person name="Gwinn M.L."/>
            <person name="DeBoy R.T."/>
            <person name="Peterson J.D."/>
            <person name="Hickey E.K."/>
            <person name="Haft D.H."/>
            <person name="Salzberg S.L."/>
            <person name="White O."/>
            <person name="Fleischmann R.D."/>
            <person name="Dougherty B.A."/>
            <person name="Mason T.M."/>
            <person name="Ciecko A."/>
            <person name="Parksey D.S."/>
            <person name="Blair E."/>
            <person name="Cittone H."/>
            <person name="Clark E.B."/>
            <person name="Cotton M.D."/>
            <person name="Utterback T.R."/>
            <person name="Khouri H.M."/>
            <person name="Qin H."/>
            <person name="Vamathevan J.J."/>
            <person name="Gill J."/>
            <person name="Scarlato V."/>
            <person name="Masignani V."/>
            <person name="Pizza M."/>
            <person name="Grandi G."/>
            <person name="Sun L."/>
            <person name="Smith H.O."/>
            <person name="Fraser C.M."/>
            <person name="Moxon E.R."/>
            <person name="Rappuoli R."/>
            <person name="Venter J.C."/>
        </authorList>
    </citation>
    <scope>NUCLEOTIDE SEQUENCE [LARGE SCALE GENOMIC DNA]</scope>
    <source>
        <strain>ATCC BAA-335 / MC58</strain>
    </source>
</reference>
<protein>
    <recommendedName>
        <fullName evidence="1">Large ribosomal subunit protein uL3</fullName>
    </recommendedName>
    <alternativeName>
        <fullName evidence="3">50S ribosomal protein L3</fullName>
    </alternativeName>
</protein>
<comment type="function">
    <text evidence="1">One of the primary rRNA binding proteins, it binds directly near the 3'-end of the 23S rRNA, where it nucleates assembly of the 50S subunit.</text>
</comment>
<comment type="subunit">
    <text evidence="1">Part of the 50S ribosomal subunit. Forms a cluster with proteins L14 and L19.</text>
</comment>
<comment type="PTM">
    <text evidence="1">Methylated by PrmB.</text>
</comment>
<comment type="similarity">
    <text evidence="1">Belongs to the universal ribosomal protein uL3 family.</text>
</comment>
<feature type="chain" id="PRO_0000077127" description="Large ribosomal subunit protein uL3">
    <location>
        <begin position="1"/>
        <end position="214"/>
    </location>
</feature>
<feature type="region of interest" description="Disordered" evidence="2">
    <location>
        <begin position="131"/>
        <end position="155"/>
    </location>
</feature>
<feature type="modified residue" description="N5-methylglutamine" evidence="1">
    <location>
        <position position="153"/>
    </location>
</feature>
<evidence type="ECO:0000255" key="1">
    <source>
        <dbReference type="HAMAP-Rule" id="MF_01325"/>
    </source>
</evidence>
<evidence type="ECO:0000256" key="2">
    <source>
        <dbReference type="SAM" id="MobiDB-lite"/>
    </source>
</evidence>
<evidence type="ECO:0000305" key="3"/>
<organism>
    <name type="scientific">Neisseria meningitidis serogroup B (strain ATCC BAA-335 / MC58)</name>
    <dbReference type="NCBI Taxonomy" id="122586"/>
    <lineage>
        <taxon>Bacteria</taxon>
        <taxon>Pseudomonadati</taxon>
        <taxon>Pseudomonadota</taxon>
        <taxon>Betaproteobacteria</taxon>
        <taxon>Neisseriales</taxon>
        <taxon>Neisseriaceae</taxon>
        <taxon>Neisseria</taxon>
    </lineage>
</organism>
<sequence>MTLGLVGRKVGMTRVFDEQGVSVPVTVLDMSANRVTQVKSKDTDGYTAVQVTFGQKKANRVNKAEAGHFAKAGVEAGRGLIEFALTEEKLAELKAGDEITVSMFEVGQLVDVTGTSKGKGFSGTIKRHNFGAQRTSHGNSRSHRVPGSIGMAQDPGRVFPGKRMAGQYGNTKATVQKLEVVRVDAERQLLLVKGAVPGAVNSDVVVRPSVKVGA</sequence>
<keyword id="KW-0488">Methylation</keyword>
<keyword id="KW-1185">Reference proteome</keyword>
<keyword id="KW-0687">Ribonucleoprotein</keyword>
<keyword id="KW-0689">Ribosomal protein</keyword>
<keyword id="KW-0694">RNA-binding</keyword>
<keyword id="KW-0699">rRNA-binding</keyword>
<gene>
    <name evidence="1" type="primary">rplC</name>
    <name type="ordered locus">NMB0142</name>
</gene>
<proteinExistence type="inferred from homology"/>
<dbReference type="EMBL" id="AE002098">
    <property type="protein sequence ID" value="AAF40600.1"/>
    <property type="molecule type" value="Genomic_DNA"/>
</dbReference>
<dbReference type="PIR" id="H81230">
    <property type="entry name" value="H81230"/>
</dbReference>
<dbReference type="RefSeq" id="NP_273200.1">
    <property type="nucleotide sequence ID" value="NC_003112.2"/>
</dbReference>
<dbReference type="RefSeq" id="WP_002215400.1">
    <property type="nucleotide sequence ID" value="NC_003112.2"/>
</dbReference>
<dbReference type="SMR" id="P60444"/>
<dbReference type="FunCoup" id="P60444">
    <property type="interactions" value="623"/>
</dbReference>
<dbReference type="STRING" id="122586.NMB0142"/>
<dbReference type="PaxDb" id="122586-NMB0142"/>
<dbReference type="GeneID" id="93387217"/>
<dbReference type="KEGG" id="nme:NMB0142"/>
<dbReference type="PATRIC" id="fig|122586.8.peg.183"/>
<dbReference type="HOGENOM" id="CLU_044142_4_1_4"/>
<dbReference type="InParanoid" id="P60444"/>
<dbReference type="OrthoDB" id="9806135at2"/>
<dbReference type="Proteomes" id="UP000000425">
    <property type="component" value="Chromosome"/>
</dbReference>
<dbReference type="GO" id="GO:0022625">
    <property type="term" value="C:cytosolic large ribosomal subunit"/>
    <property type="evidence" value="ECO:0000318"/>
    <property type="project" value="GO_Central"/>
</dbReference>
<dbReference type="GO" id="GO:0019843">
    <property type="term" value="F:rRNA binding"/>
    <property type="evidence" value="ECO:0007669"/>
    <property type="project" value="UniProtKB-UniRule"/>
</dbReference>
<dbReference type="GO" id="GO:0003735">
    <property type="term" value="F:structural constituent of ribosome"/>
    <property type="evidence" value="ECO:0000318"/>
    <property type="project" value="GO_Central"/>
</dbReference>
<dbReference type="GO" id="GO:0006412">
    <property type="term" value="P:translation"/>
    <property type="evidence" value="ECO:0007669"/>
    <property type="project" value="UniProtKB-UniRule"/>
</dbReference>
<dbReference type="FunFam" id="2.40.30.10:FF:000004">
    <property type="entry name" value="50S ribosomal protein L3"/>
    <property type="match status" value="1"/>
</dbReference>
<dbReference type="FunFam" id="3.30.160.810:FF:000001">
    <property type="entry name" value="50S ribosomal protein L3"/>
    <property type="match status" value="1"/>
</dbReference>
<dbReference type="Gene3D" id="3.30.160.810">
    <property type="match status" value="1"/>
</dbReference>
<dbReference type="Gene3D" id="2.40.30.10">
    <property type="entry name" value="Translation factors"/>
    <property type="match status" value="1"/>
</dbReference>
<dbReference type="HAMAP" id="MF_01325_B">
    <property type="entry name" value="Ribosomal_uL3_B"/>
    <property type="match status" value="1"/>
</dbReference>
<dbReference type="InterPro" id="IPR000597">
    <property type="entry name" value="Ribosomal_uL3"/>
</dbReference>
<dbReference type="InterPro" id="IPR019927">
    <property type="entry name" value="Ribosomal_uL3_bac/org-type"/>
</dbReference>
<dbReference type="InterPro" id="IPR019926">
    <property type="entry name" value="Ribosomal_uL3_CS"/>
</dbReference>
<dbReference type="InterPro" id="IPR009000">
    <property type="entry name" value="Transl_B-barrel_sf"/>
</dbReference>
<dbReference type="NCBIfam" id="TIGR03625">
    <property type="entry name" value="L3_bact"/>
    <property type="match status" value="1"/>
</dbReference>
<dbReference type="PANTHER" id="PTHR11229">
    <property type="entry name" value="50S RIBOSOMAL PROTEIN L3"/>
    <property type="match status" value="1"/>
</dbReference>
<dbReference type="PANTHER" id="PTHR11229:SF16">
    <property type="entry name" value="LARGE RIBOSOMAL SUBUNIT PROTEIN UL3C"/>
    <property type="match status" value="1"/>
</dbReference>
<dbReference type="Pfam" id="PF00297">
    <property type="entry name" value="Ribosomal_L3"/>
    <property type="match status" value="1"/>
</dbReference>
<dbReference type="SUPFAM" id="SSF50447">
    <property type="entry name" value="Translation proteins"/>
    <property type="match status" value="1"/>
</dbReference>
<dbReference type="PROSITE" id="PS00474">
    <property type="entry name" value="RIBOSOMAL_L3"/>
    <property type="match status" value="1"/>
</dbReference>
<name>RL3_NEIMB</name>
<accession>P60444</accession>
<accession>Q9JRH6</accession>